<accession>A9R4I7</accession>
<feature type="chain" id="PRO_1000126771" description="Large ribosomal subunit protein bL31">
    <location>
        <begin position="1"/>
        <end position="71"/>
    </location>
</feature>
<feature type="binding site" evidence="1">
    <location>
        <position position="16"/>
    </location>
    <ligand>
        <name>Zn(2+)</name>
        <dbReference type="ChEBI" id="CHEBI:29105"/>
    </ligand>
</feature>
<feature type="binding site" evidence="1">
    <location>
        <position position="18"/>
    </location>
    <ligand>
        <name>Zn(2+)</name>
        <dbReference type="ChEBI" id="CHEBI:29105"/>
    </ligand>
</feature>
<feature type="binding site" evidence="1">
    <location>
        <position position="37"/>
    </location>
    <ligand>
        <name>Zn(2+)</name>
        <dbReference type="ChEBI" id="CHEBI:29105"/>
    </ligand>
</feature>
<feature type="binding site" evidence="1">
    <location>
        <position position="40"/>
    </location>
    <ligand>
        <name>Zn(2+)</name>
        <dbReference type="ChEBI" id="CHEBI:29105"/>
    </ligand>
</feature>
<reference key="1">
    <citation type="journal article" date="2010" name="J. Bacteriol.">
        <title>Genome sequence of the deep-rooted Yersinia pestis strain Angola reveals new insights into the evolution and pangenome of the plague bacterium.</title>
        <authorList>
            <person name="Eppinger M."/>
            <person name="Worsham P.L."/>
            <person name="Nikolich M.P."/>
            <person name="Riley D.R."/>
            <person name="Sebastian Y."/>
            <person name="Mou S."/>
            <person name="Achtman M."/>
            <person name="Lindler L.E."/>
            <person name="Ravel J."/>
        </authorList>
    </citation>
    <scope>NUCLEOTIDE SEQUENCE [LARGE SCALE GENOMIC DNA]</scope>
    <source>
        <strain>Angola</strain>
    </source>
</reference>
<organism>
    <name type="scientific">Yersinia pestis bv. Antiqua (strain Angola)</name>
    <dbReference type="NCBI Taxonomy" id="349746"/>
    <lineage>
        <taxon>Bacteria</taxon>
        <taxon>Pseudomonadati</taxon>
        <taxon>Pseudomonadota</taxon>
        <taxon>Gammaproteobacteria</taxon>
        <taxon>Enterobacterales</taxon>
        <taxon>Yersiniaceae</taxon>
        <taxon>Yersinia</taxon>
    </lineage>
</organism>
<gene>
    <name evidence="1" type="primary">rpmE</name>
    <name type="ordered locus">YpAngola_A3811</name>
</gene>
<sequence length="71" mass="7782">MKQGIHPKYEQVTASCSCGNVIKINSTVGHDLNLDVCGECHPFYTGKQRDVASGGRVDRFNKRFSVPGAKK</sequence>
<proteinExistence type="inferred from homology"/>
<comment type="function">
    <text evidence="1">Binds the 23S rRNA.</text>
</comment>
<comment type="cofactor">
    <cofactor evidence="1">
        <name>Zn(2+)</name>
        <dbReference type="ChEBI" id="CHEBI:29105"/>
    </cofactor>
    <text evidence="1">Binds 1 zinc ion per subunit.</text>
</comment>
<comment type="subunit">
    <text evidence="1">Part of the 50S ribosomal subunit.</text>
</comment>
<comment type="similarity">
    <text evidence="1">Belongs to the bacterial ribosomal protein bL31 family. Type A subfamily.</text>
</comment>
<keyword id="KW-0479">Metal-binding</keyword>
<keyword id="KW-0687">Ribonucleoprotein</keyword>
<keyword id="KW-0689">Ribosomal protein</keyword>
<keyword id="KW-0694">RNA-binding</keyword>
<keyword id="KW-0699">rRNA-binding</keyword>
<keyword id="KW-0862">Zinc</keyword>
<dbReference type="EMBL" id="CP000901">
    <property type="protein sequence ID" value="ABX88189.1"/>
    <property type="molecule type" value="Genomic_DNA"/>
</dbReference>
<dbReference type="RefSeq" id="WP_002216737.1">
    <property type="nucleotide sequence ID" value="NZ_CP009935.1"/>
</dbReference>
<dbReference type="SMR" id="A9R4I7"/>
<dbReference type="GeneID" id="96663581"/>
<dbReference type="KEGG" id="ypg:YpAngola_A3811"/>
<dbReference type="PATRIC" id="fig|349746.12.peg.526"/>
<dbReference type="GO" id="GO:1990904">
    <property type="term" value="C:ribonucleoprotein complex"/>
    <property type="evidence" value="ECO:0007669"/>
    <property type="project" value="UniProtKB-KW"/>
</dbReference>
<dbReference type="GO" id="GO:0005840">
    <property type="term" value="C:ribosome"/>
    <property type="evidence" value="ECO:0007669"/>
    <property type="project" value="UniProtKB-KW"/>
</dbReference>
<dbReference type="GO" id="GO:0046872">
    <property type="term" value="F:metal ion binding"/>
    <property type="evidence" value="ECO:0007669"/>
    <property type="project" value="UniProtKB-KW"/>
</dbReference>
<dbReference type="GO" id="GO:0019843">
    <property type="term" value="F:rRNA binding"/>
    <property type="evidence" value="ECO:0007669"/>
    <property type="project" value="UniProtKB-KW"/>
</dbReference>
<dbReference type="GO" id="GO:0003735">
    <property type="term" value="F:structural constituent of ribosome"/>
    <property type="evidence" value="ECO:0007669"/>
    <property type="project" value="InterPro"/>
</dbReference>
<dbReference type="GO" id="GO:0006412">
    <property type="term" value="P:translation"/>
    <property type="evidence" value="ECO:0007669"/>
    <property type="project" value="UniProtKB-UniRule"/>
</dbReference>
<dbReference type="FunFam" id="4.10.830.30:FF:000001">
    <property type="entry name" value="50S ribosomal protein L31"/>
    <property type="match status" value="1"/>
</dbReference>
<dbReference type="Gene3D" id="4.10.830.30">
    <property type="entry name" value="Ribosomal protein L31"/>
    <property type="match status" value="1"/>
</dbReference>
<dbReference type="HAMAP" id="MF_00501">
    <property type="entry name" value="Ribosomal_bL31_1"/>
    <property type="match status" value="1"/>
</dbReference>
<dbReference type="InterPro" id="IPR034704">
    <property type="entry name" value="Ribosomal_bL28/bL31-like_sf"/>
</dbReference>
<dbReference type="InterPro" id="IPR002150">
    <property type="entry name" value="Ribosomal_bL31"/>
</dbReference>
<dbReference type="InterPro" id="IPR027491">
    <property type="entry name" value="Ribosomal_bL31_A"/>
</dbReference>
<dbReference type="InterPro" id="IPR042105">
    <property type="entry name" value="Ribosomal_bL31_sf"/>
</dbReference>
<dbReference type="NCBIfam" id="TIGR00105">
    <property type="entry name" value="L31"/>
    <property type="match status" value="1"/>
</dbReference>
<dbReference type="NCBIfam" id="NF000612">
    <property type="entry name" value="PRK00019.1"/>
    <property type="match status" value="1"/>
</dbReference>
<dbReference type="PANTHER" id="PTHR33280">
    <property type="entry name" value="50S RIBOSOMAL PROTEIN L31, CHLOROPLASTIC"/>
    <property type="match status" value="1"/>
</dbReference>
<dbReference type="PANTHER" id="PTHR33280:SF6">
    <property type="entry name" value="LARGE RIBOSOMAL SUBUNIT PROTEIN BL31A"/>
    <property type="match status" value="1"/>
</dbReference>
<dbReference type="Pfam" id="PF01197">
    <property type="entry name" value="Ribosomal_L31"/>
    <property type="match status" value="1"/>
</dbReference>
<dbReference type="PRINTS" id="PR01249">
    <property type="entry name" value="RIBOSOMALL31"/>
</dbReference>
<dbReference type="SUPFAM" id="SSF143800">
    <property type="entry name" value="L28p-like"/>
    <property type="match status" value="1"/>
</dbReference>
<dbReference type="PROSITE" id="PS01143">
    <property type="entry name" value="RIBOSOMAL_L31"/>
    <property type="match status" value="1"/>
</dbReference>
<name>RL31_YERPG</name>
<protein>
    <recommendedName>
        <fullName evidence="1">Large ribosomal subunit protein bL31</fullName>
    </recommendedName>
    <alternativeName>
        <fullName evidence="2">50S ribosomal protein L31</fullName>
    </alternativeName>
</protein>
<evidence type="ECO:0000255" key="1">
    <source>
        <dbReference type="HAMAP-Rule" id="MF_00501"/>
    </source>
</evidence>
<evidence type="ECO:0000305" key="2"/>